<proteinExistence type="inferred from homology"/>
<sequence length="211" mass="24435">MEAIAKHDFSATADDELSFRKTQILKILNMEDDSNWYRAELDGKEGLIPSNYIEMKNHDWYYGRITRADAEKLLSNKHEGAFLIRISESSPGDFSLSVKCPDGVQHFKVLRDAQSKFFLWVVKFNSLNELVEYHRTASVSRSQDVKLRDMIPEEMLVQALYDFVPQESGELDFRRGDVITVTDRSDENWWNGEIGNRKGIFPATYVTPYHS</sequence>
<gene>
    <name type="primary">drk</name>
    <name type="synonym">E(sev)2B</name>
</gene>
<reference key="1">
    <citation type="journal article" date="2003" name="Mol. Ecol.">
        <title>Contrasting selection pressures on components of the Ras-mediated signal transduction pathway in Drosophila.</title>
        <authorList>
            <person name="Riley R.M."/>
            <person name="Jin W."/>
            <person name="Gibson G."/>
        </authorList>
    </citation>
    <scope>NUCLEOTIDE SEQUENCE [GENOMIC DNA]</scope>
    <source>
        <strain>SIM31</strain>
    </source>
</reference>
<feature type="chain" id="PRO_0000088211" description="Protein E(sev)2B">
    <location>
        <begin position="1"/>
        <end position="211"/>
    </location>
</feature>
<feature type="domain" description="SH3 1" evidence="3">
    <location>
        <begin position="1"/>
        <end position="58"/>
    </location>
</feature>
<feature type="domain" description="SH2" evidence="2">
    <location>
        <begin position="60"/>
        <end position="151"/>
    </location>
</feature>
<feature type="domain" description="SH3 2" evidence="3">
    <location>
        <begin position="152"/>
        <end position="211"/>
    </location>
</feature>
<keyword id="KW-0472">Membrane</keyword>
<keyword id="KW-0677">Repeat</keyword>
<keyword id="KW-0727">SH2 domain</keyword>
<keyword id="KW-0728">SH3 domain</keyword>
<keyword id="KW-0807">Transducer</keyword>
<organism>
    <name type="scientific">Drosophila simulans</name>
    <name type="common">Fruit fly</name>
    <dbReference type="NCBI Taxonomy" id="7240"/>
    <lineage>
        <taxon>Eukaryota</taxon>
        <taxon>Metazoa</taxon>
        <taxon>Ecdysozoa</taxon>
        <taxon>Arthropoda</taxon>
        <taxon>Hexapoda</taxon>
        <taxon>Insecta</taxon>
        <taxon>Pterygota</taxon>
        <taxon>Neoptera</taxon>
        <taxon>Endopterygota</taxon>
        <taxon>Diptera</taxon>
        <taxon>Brachycera</taxon>
        <taxon>Muscomorpha</taxon>
        <taxon>Ephydroidea</taxon>
        <taxon>Drosophilidae</taxon>
        <taxon>Drosophila</taxon>
        <taxon>Sophophora</taxon>
    </lineage>
</organism>
<name>DRK_DROSI</name>
<accession>Q6YKA8</accession>
<dbReference type="EMBL" id="AY135137">
    <property type="protein sequence ID" value="AAN17586.1"/>
    <property type="molecule type" value="Genomic_DNA"/>
</dbReference>
<dbReference type="EMBL" id="AY135136">
    <property type="protein sequence ID" value="AAN17586.1"/>
    <property type="status" value="JOINED"/>
    <property type="molecule type" value="Genomic_DNA"/>
</dbReference>
<dbReference type="SMR" id="Q6YKA8"/>
<dbReference type="EnsemblMetazoa" id="FBtr0358051">
    <property type="protein sequence ID" value="FBpp0322090"/>
    <property type="gene ID" value="FBgn0063984"/>
</dbReference>
<dbReference type="EnsemblMetazoa" id="FBtr0359196">
    <property type="protein sequence ID" value="FBpp0323130"/>
    <property type="gene ID" value="FBgn0063984"/>
</dbReference>
<dbReference type="EnsemblMetazoa" id="XM_016182127.2">
    <property type="protein sequence ID" value="XP_016027399.1"/>
    <property type="gene ID" value="LOC6734328"/>
</dbReference>
<dbReference type="EnsemblMetazoa" id="XM_016182128.3">
    <property type="protein sequence ID" value="XP_016027400.1"/>
    <property type="gene ID" value="LOC6734328"/>
</dbReference>
<dbReference type="EnsemblMetazoa" id="XM_044922396.1">
    <property type="protein sequence ID" value="XP_044778331.1"/>
    <property type="gene ID" value="LOC6734328"/>
</dbReference>
<dbReference type="GeneID" id="6734328"/>
<dbReference type="CTD" id="36497"/>
<dbReference type="OrthoDB" id="10255964at2759"/>
<dbReference type="ChiTaRS" id="drk">
    <property type="organism name" value="fly"/>
</dbReference>
<dbReference type="Bgee" id="FBgn0063984">
    <property type="expression patterns" value="Expressed in embryo and 3 other cell types or tissues"/>
</dbReference>
<dbReference type="GO" id="GO:0005886">
    <property type="term" value="C:plasma membrane"/>
    <property type="evidence" value="ECO:0000250"/>
    <property type="project" value="UniProtKB"/>
</dbReference>
<dbReference type="GO" id="GO:0098793">
    <property type="term" value="C:presynapse"/>
    <property type="evidence" value="ECO:0007669"/>
    <property type="project" value="EnsemblMetazoa"/>
</dbReference>
<dbReference type="GO" id="GO:0032991">
    <property type="term" value="C:protein-containing complex"/>
    <property type="evidence" value="ECO:0007669"/>
    <property type="project" value="EnsemblMetazoa"/>
</dbReference>
<dbReference type="GO" id="GO:0005154">
    <property type="term" value="F:epidermal growth factor receptor binding"/>
    <property type="evidence" value="ECO:0007669"/>
    <property type="project" value="EnsemblMetazoa"/>
</dbReference>
<dbReference type="GO" id="GO:0001784">
    <property type="term" value="F:phosphotyrosine residue binding"/>
    <property type="evidence" value="ECO:0007669"/>
    <property type="project" value="EnsemblMetazoa"/>
</dbReference>
<dbReference type="GO" id="GO:0005118">
    <property type="term" value="F:sevenless binding"/>
    <property type="evidence" value="ECO:0007669"/>
    <property type="project" value="EnsemblMetazoa"/>
</dbReference>
<dbReference type="GO" id="GO:0030159">
    <property type="term" value="F:signaling receptor complex adaptor activity"/>
    <property type="evidence" value="ECO:0000250"/>
    <property type="project" value="UniProtKB"/>
</dbReference>
<dbReference type="GO" id="GO:0007173">
    <property type="term" value="P:epidermal growth factor receptor signaling pathway"/>
    <property type="evidence" value="ECO:0007669"/>
    <property type="project" value="EnsemblMetazoa"/>
</dbReference>
<dbReference type="GO" id="GO:0007427">
    <property type="term" value="P:epithelial cell migration, open tracheal system"/>
    <property type="evidence" value="ECO:0007669"/>
    <property type="project" value="EnsemblMetazoa"/>
</dbReference>
<dbReference type="GO" id="GO:0008543">
    <property type="term" value="P:fibroblast growth factor receptor signaling pathway"/>
    <property type="evidence" value="ECO:0007669"/>
    <property type="project" value="EnsemblMetazoa"/>
</dbReference>
<dbReference type="GO" id="GO:0030707">
    <property type="term" value="P:follicle cell of egg chamber development"/>
    <property type="evidence" value="ECO:0007669"/>
    <property type="project" value="EnsemblMetazoa"/>
</dbReference>
<dbReference type="GO" id="GO:0007476">
    <property type="term" value="P:imaginal disc-derived wing morphogenesis"/>
    <property type="evidence" value="ECO:0007669"/>
    <property type="project" value="EnsemblMetazoa"/>
</dbReference>
<dbReference type="GO" id="GO:0008286">
    <property type="term" value="P:insulin receptor signaling pathway"/>
    <property type="evidence" value="ECO:0007669"/>
    <property type="project" value="EnsemblMetazoa"/>
</dbReference>
<dbReference type="GO" id="GO:0008355">
    <property type="term" value="P:olfactory learning"/>
    <property type="evidence" value="ECO:0007669"/>
    <property type="project" value="EnsemblMetazoa"/>
</dbReference>
<dbReference type="GO" id="GO:0045793">
    <property type="term" value="P:positive regulation of cell size"/>
    <property type="evidence" value="ECO:0007669"/>
    <property type="project" value="EnsemblMetazoa"/>
</dbReference>
<dbReference type="GO" id="GO:0070374">
    <property type="term" value="P:positive regulation of ERK1 and ERK2 cascade"/>
    <property type="evidence" value="ECO:0007669"/>
    <property type="project" value="EnsemblMetazoa"/>
</dbReference>
<dbReference type="GO" id="GO:0048260">
    <property type="term" value="P:positive regulation of receptor-mediated endocytosis"/>
    <property type="evidence" value="ECO:0007669"/>
    <property type="project" value="EnsemblMetazoa"/>
</dbReference>
<dbReference type="GO" id="GO:1904263">
    <property type="term" value="P:positive regulation of TORC1 signaling"/>
    <property type="evidence" value="ECO:0007669"/>
    <property type="project" value="EnsemblMetazoa"/>
</dbReference>
<dbReference type="GO" id="GO:0007265">
    <property type="term" value="P:Ras protein signal transduction"/>
    <property type="evidence" value="ECO:0007669"/>
    <property type="project" value="EnsemblMetazoa"/>
</dbReference>
<dbReference type="GO" id="GO:0007605">
    <property type="term" value="P:sensory perception of sound"/>
    <property type="evidence" value="ECO:0007669"/>
    <property type="project" value="EnsemblMetazoa"/>
</dbReference>
<dbReference type="GO" id="GO:0045500">
    <property type="term" value="P:sevenless signaling pathway"/>
    <property type="evidence" value="ECO:0000250"/>
    <property type="project" value="UniProtKB"/>
</dbReference>
<dbReference type="GO" id="GO:0007614">
    <property type="term" value="P:short-term memory"/>
    <property type="evidence" value="ECO:0007669"/>
    <property type="project" value="EnsemblMetazoa"/>
</dbReference>
<dbReference type="GO" id="GO:0008293">
    <property type="term" value="P:torso signaling pathway"/>
    <property type="evidence" value="ECO:0007669"/>
    <property type="project" value="EnsemblMetazoa"/>
</dbReference>
<dbReference type="GO" id="GO:0007426">
    <property type="term" value="P:tracheal outgrowth, open tracheal system"/>
    <property type="evidence" value="ECO:0007669"/>
    <property type="project" value="EnsemblMetazoa"/>
</dbReference>
<dbReference type="GO" id="GO:0048010">
    <property type="term" value="P:vascular endothelial growth factor receptor signaling pathway"/>
    <property type="evidence" value="ECO:0007669"/>
    <property type="project" value="EnsemblMetazoa"/>
</dbReference>
<dbReference type="CDD" id="cd09941">
    <property type="entry name" value="SH2_Grb2_like"/>
    <property type="match status" value="1"/>
</dbReference>
<dbReference type="CDD" id="cd11805">
    <property type="entry name" value="SH3_GRB2_like_C"/>
    <property type="match status" value="1"/>
</dbReference>
<dbReference type="CDD" id="cd11804">
    <property type="entry name" value="SH3_GRB2_like_N"/>
    <property type="match status" value="1"/>
</dbReference>
<dbReference type="FunFam" id="2.30.30.40:FF:000067">
    <property type="entry name" value="Growth factor receptor-bound protein 2"/>
    <property type="match status" value="1"/>
</dbReference>
<dbReference type="FunFam" id="2.30.30.40:FF:000076">
    <property type="entry name" value="Growth factor receptor-bound protein 2"/>
    <property type="match status" value="1"/>
</dbReference>
<dbReference type="FunFam" id="3.30.505.10:FF:000022">
    <property type="entry name" value="Growth factor receptor-bound protein 2"/>
    <property type="match status" value="1"/>
</dbReference>
<dbReference type="Gene3D" id="3.30.505.10">
    <property type="entry name" value="SH2 domain"/>
    <property type="match status" value="1"/>
</dbReference>
<dbReference type="Gene3D" id="2.30.30.40">
    <property type="entry name" value="SH3 Domains"/>
    <property type="match status" value="2"/>
</dbReference>
<dbReference type="InterPro" id="IPR043539">
    <property type="entry name" value="Grb2-like"/>
</dbReference>
<dbReference type="InterPro" id="IPR000980">
    <property type="entry name" value="SH2"/>
</dbReference>
<dbReference type="InterPro" id="IPR036860">
    <property type="entry name" value="SH2_dom_sf"/>
</dbReference>
<dbReference type="InterPro" id="IPR036028">
    <property type="entry name" value="SH3-like_dom_sf"/>
</dbReference>
<dbReference type="InterPro" id="IPR001452">
    <property type="entry name" value="SH3_domain"/>
</dbReference>
<dbReference type="PANTHER" id="PTHR46037">
    <property type="entry name" value="PROTEIN ENHANCER OF SEVENLESS 2B"/>
    <property type="match status" value="1"/>
</dbReference>
<dbReference type="Pfam" id="PF00017">
    <property type="entry name" value="SH2"/>
    <property type="match status" value="1"/>
</dbReference>
<dbReference type="Pfam" id="PF00018">
    <property type="entry name" value="SH3_1"/>
    <property type="match status" value="2"/>
</dbReference>
<dbReference type="PRINTS" id="PR00499">
    <property type="entry name" value="P67PHOX"/>
</dbReference>
<dbReference type="PRINTS" id="PR00401">
    <property type="entry name" value="SH2DOMAIN"/>
</dbReference>
<dbReference type="PRINTS" id="PR00452">
    <property type="entry name" value="SH3DOMAIN"/>
</dbReference>
<dbReference type="SMART" id="SM00252">
    <property type="entry name" value="SH2"/>
    <property type="match status" value="1"/>
</dbReference>
<dbReference type="SMART" id="SM00326">
    <property type="entry name" value="SH3"/>
    <property type="match status" value="2"/>
</dbReference>
<dbReference type="SUPFAM" id="SSF55550">
    <property type="entry name" value="SH2 domain"/>
    <property type="match status" value="1"/>
</dbReference>
<dbReference type="SUPFAM" id="SSF50044">
    <property type="entry name" value="SH3-domain"/>
    <property type="match status" value="2"/>
</dbReference>
<dbReference type="PROSITE" id="PS50001">
    <property type="entry name" value="SH2"/>
    <property type="match status" value="1"/>
</dbReference>
<dbReference type="PROSITE" id="PS50002">
    <property type="entry name" value="SH3"/>
    <property type="match status" value="2"/>
</dbReference>
<protein>
    <recommendedName>
        <fullName>Protein E(sev)2B</fullName>
    </recommendedName>
    <alternativeName>
        <fullName>Downstream of receptor kinase</fullName>
    </alternativeName>
    <alternativeName>
        <fullName>Protein enhancer of sevenless 2B</fullName>
    </alternativeName>
    <alternativeName>
        <fullName>SH2-SH3 adapter protein drk</fullName>
    </alternativeName>
</protein>
<comment type="function">
    <text evidence="1">Required for proper signaling by sevenless. May act to stimulate the ability of Sos to catalyze Ras1 activation by linking sevenless and Sos in a signaling complex (By similarity).</text>
</comment>
<comment type="subunit">
    <text evidence="1">Interacts with autophosphorylated sev via SH2 domain and Sos and Dab via SH3 domains. Binds to tyrosine phosphorylated Dab via the SH2 domain (By similarity).</text>
</comment>
<comment type="subcellular location">
    <subcellularLocation>
        <location evidence="1">Membrane</location>
        <topology evidence="1">Peripheral membrane protein</topology>
    </subcellularLocation>
</comment>
<comment type="similarity">
    <text evidence="4">Belongs to the GRB2/sem-5/DRK family.</text>
</comment>
<evidence type="ECO:0000250" key="1"/>
<evidence type="ECO:0000255" key="2">
    <source>
        <dbReference type="PROSITE-ProRule" id="PRU00191"/>
    </source>
</evidence>
<evidence type="ECO:0000255" key="3">
    <source>
        <dbReference type="PROSITE-ProRule" id="PRU00192"/>
    </source>
</evidence>
<evidence type="ECO:0000305" key="4"/>